<gene>
    <name evidence="1" type="primary">cyaY</name>
    <name type="ordered locus">YpAngola_A0539</name>
</gene>
<evidence type="ECO:0000255" key="1">
    <source>
        <dbReference type="HAMAP-Rule" id="MF_00142"/>
    </source>
</evidence>
<reference key="1">
    <citation type="journal article" date="2010" name="J. Bacteriol.">
        <title>Genome sequence of the deep-rooted Yersinia pestis strain Angola reveals new insights into the evolution and pangenome of the plague bacterium.</title>
        <authorList>
            <person name="Eppinger M."/>
            <person name="Worsham P.L."/>
            <person name="Nikolich M.P."/>
            <person name="Riley D.R."/>
            <person name="Sebastian Y."/>
            <person name="Mou S."/>
            <person name="Achtman M."/>
            <person name="Lindler L.E."/>
            <person name="Ravel J."/>
        </authorList>
    </citation>
    <scope>NUCLEOTIDE SEQUENCE [LARGE SCALE GENOMIC DNA]</scope>
    <source>
        <strain>Angola</strain>
    </source>
</reference>
<organism>
    <name type="scientific">Yersinia pestis bv. Antiqua (strain Angola)</name>
    <dbReference type="NCBI Taxonomy" id="349746"/>
    <lineage>
        <taxon>Bacteria</taxon>
        <taxon>Pseudomonadati</taxon>
        <taxon>Pseudomonadota</taxon>
        <taxon>Gammaproteobacteria</taxon>
        <taxon>Enterobacterales</taxon>
        <taxon>Yersiniaceae</taxon>
        <taxon>Yersinia</taxon>
    </lineage>
</organism>
<proteinExistence type="inferred from homology"/>
<accession>A9R8K3</accession>
<feature type="chain" id="PRO_1000096262" description="Iron-sulfur cluster assembly protein CyaY">
    <location>
        <begin position="1"/>
        <end position="106"/>
    </location>
</feature>
<name>CYAY_YERPG</name>
<sequence>MNDSEFHQLADQLMLYIEETLDSFTGDSDIDYETNGGVMTLTFENGSKIVINRQEPLHQVWLATKAGGYHFNYRDGHWYCSRSGEEFLAKLSEAASAQAGENVSFG</sequence>
<keyword id="KW-0408">Iron</keyword>
<keyword id="KW-0479">Metal-binding</keyword>
<comment type="function">
    <text evidence="1">Involved in iron-sulfur (Fe-S) cluster assembly. May act as a regulator of Fe-S biogenesis.</text>
</comment>
<comment type="similarity">
    <text evidence="1">Belongs to the frataxin family.</text>
</comment>
<dbReference type="EMBL" id="CP000901">
    <property type="protein sequence ID" value="ABX86988.1"/>
    <property type="molecule type" value="Genomic_DNA"/>
</dbReference>
<dbReference type="RefSeq" id="WP_002211469.1">
    <property type="nucleotide sequence ID" value="NZ_CP009935.1"/>
</dbReference>
<dbReference type="SMR" id="A9R8K3"/>
<dbReference type="GeneID" id="57974862"/>
<dbReference type="KEGG" id="ypg:YpAngola_A0539"/>
<dbReference type="PATRIC" id="fig|349746.12.peg.1485"/>
<dbReference type="GO" id="GO:0005829">
    <property type="term" value="C:cytosol"/>
    <property type="evidence" value="ECO:0007669"/>
    <property type="project" value="TreeGrafter"/>
</dbReference>
<dbReference type="GO" id="GO:0008199">
    <property type="term" value="F:ferric iron binding"/>
    <property type="evidence" value="ECO:0007669"/>
    <property type="project" value="InterPro"/>
</dbReference>
<dbReference type="GO" id="GO:0008198">
    <property type="term" value="F:ferrous iron binding"/>
    <property type="evidence" value="ECO:0007669"/>
    <property type="project" value="TreeGrafter"/>
</dbReference>
<dbReference type="GO" id="GO:0016226">
    <property type="term" value="P:iron-sulfur cluster assembly"/>
    <property type="evidence" value="ECO:0007669"/>
    <property type="project" value="UniProtKB-UniRule"/>
</dbReference>
<dbReference type="CDD" id="cd00503">
    <property type="entry name" value="Frataxin"/>
    <property type="match status" value="1"/>
</dbReference>
<dbReference type="FunFam" id="3.30.920.10:FF:000001">
    <property type="entry name" value="Iron-sulfur cluster assembly protein CyaY"/>
    <property type="match status" value="1"/>
</dbReference>
<dbReference type="Gene3D" id="3.30.920.10">
    <property type="entry name" value="Frataxin/CyaY"/>
    <property type="match status" value="1"/>
</dbReference>
<dbReference type="HAMAP" id="MF_00142">
    <property type="entry name" value="CyaY"/>
    <property type="match status" value="1"/>
</dbReference>
<dbReference type="InterPro" id="IPR047584">
    <property type="entry name" value="CyaY"/>
</dbReference>
<dbReference type="InterPro" id="IPR002908">
    <property type="entry name" value="Frataxin/CyaY"/>
</dbReference>
<dbReference type="InterPro" id="IPR036524">
    <property type="entry name" value="Frataxin/CyaY_sf"/>
</dbReference>
<dbReference type="InterPro" id="IPR020895">
    <property type="entry name" value="Frataxin_CS"/>
</dbReference>
<dbReference type="NCBIfam" id="TIGR03421">
    <property type="entry name" value="FeS_CyaY"/>
    <property type="match status" value="1"/>
</dbReference>
<dbReference type="PANTHER" id="PTHR16821">
    <property type="entry name" value="FRATAXIN"/>
    <property type="match status" value="1"/>
</dbReference>
<dbReference type="PANTHER" id="PTHR16821:SF2">
    <property type="entry name" value="FRATAXIN, MITOCHONDRIAL"/>
    <property type="match status" value="1"/>
</dbReference>
<dbReference type="Pfam" id="PF01491">
    <property type="entry name" value="Frataxin_Cyay"/>
    <property type="match status" value="1"/>
</dbReference>
<dbReference type="SMART" id="SM01219">
    <property type="entry name" value="Frataxin_Cyay"/>
    <property type="match status" value="1"/>
</dbReference>
<dbReference type="SUPFAM" id="SSF55387">
    <property type="entry name" value="Frataxin/Nqo15-like"/>
    <property type="match status" value="1"/>
</dbReference>
<dbReference type="PROSITE" id="PS01344">
    <property type="entry name" value="FRATAXIN_1"/>
    <property type="match status" value="1"/>
</dbReference>
<dbReference type="PROSITE" id="PS50810">
    <property type="entry name" value="FRATAXIN_2"/>
    <property type="match status" value="1"/>
</dbReference>
<protein>
    <recommendedName>
        <fullName evidence="1">Iron-sulfur cluster assembly protein CyaY</fullName>
    </recommendedName>
</protein>